<gene>
    <name evidence="18 20" type="primary">ZDHHC5</name>
    <name type="synonym">KIAA1748</name>
    <name type="synonym">ZNF375</name>
</gene>
<comment type="function">
    <text evidence="3 7 8 9 10 11 12 13 14 15 16">Palmitoyltransferase that catalyzes the addition of palmitate onto various protein substrates such as CTNND2, CD36, GSDMD, NLRP3, NOD1, NOD2, STAT3 and S1PR1 thus plays a role in various biological processes including cell adhesion, inflammation, fatty acid uptake, bacterial sensing or cardiac functions (PubMed:21820437, PubMed:29185452, PubMed:31402609, PubMed:31649195, PubMed:34293401, PubMed:38092000, PubMed:38530158, PubMed:38599239). Plays an important role in the regulation of synapse efficacy by mediating palmitoylation of delta-catenin/CTNND2, thereby increasing synaptic delivery and surface stabilization of alpha-amino-3-hydroxy-5-methyl-4-isoxazole propionic acid receptors (AMPARs) (PubMed:26334723). Under basal conditions, remains at the synaptic membrane through FYN-mediated phosphorylation that prevents association with endocytic proteins (PubMed:26334723). Neuronal activity enhances the internalization and trafficking of DHHC5 from spines to dendritic shafts where it palmitoylates delta-catenin/CTNND2 (PubMed:26334723). Regulates cell adhesion at the plasma membrane by palmitoylating GOLGA7B and DSG2 (PubMed:31402609). Plays a role in innate immune response by mediating the palmitoylation of NOD1 and NOD2 and their proper recruitment to the bacterial entry site and phagosomes (PubMed:31649195, PubMed:34293401). Also participates in fatty acid uptake by palmitoylating CD36 and thereby targeting it to the plasma membrane (PubMed:32958780). Upon binding of fatty acids to CD36, gets phosphorylated by LYN leading to inactivation and subsequent CD36 caveolar endocytosis (PubMed:32958780). Controls oligodendrocyte development by catalyzing STAT3 palmitoylation (By similarity). Acts as a regulator of inflammatory response by mediating palmitoylation of NLRP3 and GSDMD (PubMed:38092000, PubMed:38530158, PubMed:38599239). Palmitoylates NLRP3 to promote inflammasome assembly and activation (PubMed:38092000). Activates pyroptosis by catalyzing palmitoylation of gasdermin-D (GSDMD), thereby promoting membrane translocation and pore formation of GSDMD (PubMed:38530158, PubMed:38599239).</text>
</comment>
<comment type="catalytic activity">
    <reaction evidence="9 10 11 13 15 16">
        <text>L-cysteinyl-[protein] + hexadecanoyl-CoA = S-hexadecanoyl-L-cysteinyl-[protein] + CoA</text>
        <dbReference type="Rhea" id="RHEA:36683"/>
        <dbReference type="Rhea" id="RHEA-COMP:10131"/>
        <dbReference type="Rhea" id="RHEA-COMP:11032"/>
        <dbReference type="ChEBI" id="CHEBI:29950"/>
        <dbReference type="ChEBI" id="CHEBI:57287"/>
        <dbReference type="ChEBI" id="CHEBI:57379"/>
        <dbReference type="ChEBI" id="CHEBI:74151"/>
        <dbReference type="EC" id="2.3.1.225"/>
    </reaction>
    <physiologicalReaction direction="left-to-right" evidence="9 10 11 13 15 16">
        <dbReference type="Rhea" id="RHEA:36684"/>
    </physiologicalReaction>
</comment>
<comment type="interaction">
    <interactant intactId="EBI-2799626">
        <id>Q9C0B5</id>
    </interactant>
    <interactant intactId="EBI-13310443">
        <id>Q2TAP0</id>
        <label>GOLGA7B</label>
    </interactant>
    <organismsDiffer>false</organismsDiffer>
    <experiments>4</experiments>
</comment>
<comment type="interaction">
    <interactant intactId="EBI-2799626">
        <id>Q9C0B5</id>
    </interactant>
    <interactant intactId="EBI-25474821">
        <id>P0DTC2</id>
        <label>S</label>
    </interactant>
    <organismsDiffer>true</organismsDiffer>
    <experiments>8</experiments>
</comment>
<comment type="subcellular location">
    <subcellularLocation>
        <location evidence="8 9 10 12">Cell membrane</location>
        <topology evidence="4">Multi-pass membrane protein</topology>
    </subcellularLocation>
    <subcellularLocation>
        <location evidence="8">Synapse</location>
    </subcellularLocation>
</comment>
<comment type="alternative products">
    <event type="alternative splicing"/>
    <isoform>
        <id>Q9C0B5-1</id>
        <name>1</name>
        <sequence type="displayed"/>
    </isoform>
    <isoform>
        <id>Q9C0B5-2</id>
        <name>2</name>
        <sequence type="described" ref="VSP_006935"/>
    </isoform>
</comment>
<comment type="domain">
    <text evidence="2">The DHHC domain is required for palmitoyltransferase activity.</text>
</comment>
<comment type="PTM">
    <text evidence="8 12">Phosphorylation regulates association with endocytic proteins and its subcellular localization (PubMed:26334723). Phosphorylation by LYN during fatty acid uptake leads to inactivation of the activity (PubMed:32958780).</text>
</comment>
<comment type="PTM">
    <text evidence="1 8">Autopalmitoylated (PubMed:26334723). Palmitoylation of the C-terminal tail regulates stimulation-dependent plasma membrane motility (By similarity).</text>
</comment>
<comment type="similarity">
    <text evidence="19">Belongs to the DHHC palmitoyltransferase family. ERF2/ZDHHC9 subfamily.</text>
</comment>
<comment type="sequence caution" evidence="19">
    <conflict type="erroneous initiation">
        <sequence resource="EMBL-CDS" id="BAB21839"/>
    </conflict>
    <text>Extended N-terminus.</text>
</comment>
<comment type="sequence caution" evidence="19">
    <conflict type="erroneous initiation">
        <sequence resource="EMBL-CDS" id="BAD18778"/>
    </conflict>
    <text>Truncated N-terminus.</text>
</comment>
<feature type="chain" id="PRO_0000212868" description="Palmitoyltransferase ZDHHC5">
    <location>
        <begin position="1"/>
        <end position="715"/>
    </location>
</feature>
<feature type="topological domain" description="Cytoplasmic" evidence="4">
    <location>
        <begin position="1"/>
        <end position="13"/>
    </location>
</feature>
<feature type="transmembrane region" description="Helical" evidence="4">
    <location>
        <begin position="14"/>
        <end position="34"/>
    </location>
</feature>
<feature type="topological domain" description="Extracellular" evidence="4">
    <location>
        <begin position="35"/>
        <end position="38"/>
    </location>
</feature>
<feature type="transmembrane region" description="Helical" evidence="4">
    <location>
        <begin position="39"/>
        <end position="59"/>
    </location>
</feature>
<feature type="topological domain" description="Cytoplasmic" evidence="4">
    <location>
        <begin position="60"/>
        <end position="148"/>
    </location>
</feature>
<feature type="transmembrane region" description="Helical" evidence="4">
    <location>
        <begin position="149"/>
        <end position="169"/>
    </location>
</feature>
<feature type="topological domain" description="Extracellular" evidence="4">
    <location>
        <begin position="170"/>
        <end position="191"/>
    </location>
</feature>
<feature type="transmembrane region" description="Helical" evidence="4">
    <location>
        <begin position="192"/>
        <end position="212"/>
    </location>
</feature>
<feature type="topological domain" description="Cytoplasmic" evidence="4">
    <location>
        <begin position="213"/>
        <end position="715"/>
    </location>
</feature>
<feature type="domain" description="DHHC" evidence="5">
    <location>
        <begin position="104"/>
        <end position="154"/>
    </location>
</feature>
<feature type="region of interest" description="Disordered" evidence="6">
    <location>
        <begin position="289"/>
        <end position="715"/>
    </location>
</feature>
<feature type="compositionally biased region" description="Low complexity" evidence="6">
    <location>
        <begin position="359"/>
        <end position="373"/>
    </location>
</feature>
<feature type="compositionally biased region" description="Low complexity" evidence="6">
    <location>
        <begin position="422"/>
        <end position="432"/>
    </location>
</feature>
<feature type="compositionally biased region" description="Polar residues" evidence="6">
    <location>
        <begin position="442"/>
        <end position="478"/>
    </location>
</feature>
<feature type="compositionally biased region" description="Polar residues" evidence="6">
    <location>
        <begin position="666"/>
        <end position="677"/>
    </location>
</feature>
<feature type="active site" description="S-palmitoyl cysteine intermediate" evidence="3">
    <location>
        <position position="134"/>
    </location>
</feature>
<feature type="modified residue" description="Phosphotyrosine; by LYN" evidence="12">
    <location>
        <position position="91"/>
    </location>
</feature>
<feature type="modified residue" description="Phosphoserine" evidence="28">
    <location>
        <position position="247"/>
    </location>
</feature>
<feature type="modified residue" description="Phosphothreonine" evidence="3">
    <location>
        <position position="294"/>
    </location>
</feature>
<feature type="modified residue" description="Phosphoserine" evidence="23">
    <location>
        <position position="296"/>
    </location>
</feature>
<feature type="modified residue" description="Phosphoserine" evidence="28">
    <location>
        <position position="299"/>
    </location>
</feature>
<feature type="modified residue" description="Phosphothreonine" evidence="3">
    <location>
        <position position="303"/>
    </location>
</feature>
<feature type="modified residue" description="Phosphoserine" evidence="23">
    <location>
        <position position="345"/>
    </location>
</feature>
<feature type="modified residue" description="Phosphothreonine" evidence="23">
    <location>
        <position position="348"/>
    </location>
</feature>
<feature type="modified residue" description="Phosphothreonine" evidence="3">
    <location>
        <position position="350"/>
    </location>
</feature>
<feature type="modified residue" description="Phosphoserine" evidence="23 26 28 30">
    <location>
        <position position="380"/>
    </location>
</feature>
<feature type="modified residue" description="Phosphoserine" evidence="28">
    <location>
        <position position="398"/>
    </location>
</feature>
<feature type="modified residue" description="Phosphoserine" evidence="28">
    <location>
        <position position="406"/>
    </location>
</feature>
<feature type="modified residue" description="Phosphoserine" evidence="23 28">
    <location>
        <position position="409"/>
    </location>
</feature>
<feature type="modified residue" description="Phosphothreonine" evidence="28">
    <location>
        <position position="411"/>
    </location>
</feature>
<feature type="modified residue" description="Phosphoserine" evidence="28">
    <location>
        <position position="415"/>
    </location>
</feature>
<feature type="modified residue" description="Phosphoserine" evidence="28">
    <location>
        <position position="425"/>
    </location>
</feature>
<feature type="modified residue" description="Phosphoserine" evidence="3">
    <location>
        <position position="429"/>
    </location>
</feature>
<feature type="modified residue" description="Phosphoserine" evidence="21 23 25 26 28">
    <location>
        <position position="432"/>
    </location>
</feature>
<feature type="modified residue" description="Phosphothreonine" evidence="23 25 28">
    <location>
        <position position="436"/>
    </location>
</feature>
<feature type="modified residue" description="Phosphoserine" evidence="28">
    <location>
        <position position="529"/>
    </location>
</feature>
<feature type="modified residue" description="Phosphotyrosine; by FYN" evidence="8">
    <location>
        <position position="533"/>
    </location>
</feature>
<feature type="modified residue" description="Phosphoserine" evidence="23 28 30">
    <location>
        <position position="554"/>
    </location>
</feature>
<feature type="modified residue" description="Omega-N-methylarginine" evidence="29">
    <location>
        <position position="617"/>
    </location>
</feature>
<feature type="modified residue" description="Phosphoserine" evidence="22 23 24 25 26 27 28">
    <location>
        <position position="621"/>
    </location>
</feature>
<feature type="modified residue" description="Phosphothreonine" evidence="23">
    <location>
        <position position="659"/>
    </location>
</feature>
<feature type="modified residue" description="Phosphoserine" evidence="26 28">
    <location>
        <position position="684"/>
    </location>
</feature>
<feature type="modified residue" description="Phosphoserine" evidence="23 26 28">
    <location>
        <position position="694"/>
    </location>
</feature>
<feature type="modified residue" description="Omega-N-methylarginine" evidence="3">
    <location>
        <position position="697"/>
    </location>
</feature>
<feature type="splice variant" id="VSP_006935" description="In isoform 2." evidence="17">
    <location>
        <begin position="1"/>
        <end position="53"/>
    </location>
</feature>
<feature type="mutagenesis site" description="More than 50% loss of activity." evidence="12">
    <original>Y</original>
    <variation>E</variation>
    <location>
        <position position="91"/>
    </location>
</feature>
<feature type="mutagenesis site" description="More than 50% loss of FYN-mediated phosphorylation." evidence="8">
    <original>Y</original>
    <variation>E</variation>
    <location>
        <position position="533"/>
    </location>
</feature>
<feature type="sequence conflict" description="In Ref. 6; CAB56033." evidence="19" ref="6">
    <original>QQ</original>
    <variation>TR</variation>
    <location>
        <begin position="508"/>
        <end position="509"/>
    </location>
</feature>
<protein>
    <recommendedName>
        <fullName>Palmitoyltransferase ZDHHC5</fullName>
        <ecNumber evidence="9 10 11 15 16">2.3.1.225</ecNumber>
    </recommendedName>
    <alternativeName>
        <fullName>Zinc finger DHHC domain-containing protein 5</fullName>
        <shortName>DHHC-5</shortName>
    </alternativeName>
    <alternativeName>
        <fullName>Zinc finger protein 375</fullName>
    </alternativeName>
</protein>
<reference key="1">
    <citation type="journal article" date="2000" name="DNA Res.">
        <title>Prediction of the coding sequences of unidentified human genes. XIX. The complete sequences of 100 new cDNA clones from brain which code for large proteins in vitro.</title>
        <authorList>
            <person name="Nagase T."/>
            <person name="Kikuno R."/>
            <person name="Hattori A."/>
            <person name="Kondo Y."/>
            <person name="Okumura K."/>
            <person name="Ohara O."/>
        </authorList>
    </citation>
    <scope>NUCLEOTIDE SEQUENCE [LARGE SCALE MRNA] (ISOFORM 1)</scope>
    <source>
        <tissue>Brain</tissue>
    </source>
</reference>
<reference key="2">
    <citation type="submission" date="2005-01" db="EMBL/GenBank/DDBJ databases">
        <title>A superfamily of membrane-associated DHHC type zinc finger proteins.</title>
        <authorList>
            <person name="Huang C.-H."/>
            <person name="Chen Y."/>
            <person name="Ye T."/>
        </authorList>
    </citation>
    <scope>NUCLEOTIDE SEQUENCE [MRNA]</scope>
</reference>
<reference key="3">
    <citation type="journal article" date="2004" name="Nat. Genet.">
        <title>Complete sequencing and characterization of 21,243 full-length human cDNAs.</title>
        <authorList>
            <person name="Ota T."/>
            <person name="Suzuki Y."/>
            <person name="Nishikawa T."/>
            <person name="Otsuki T."/>
            <person name="Sugiyama T."/>
            <person name="Irie R."/>
            <person name="Wakamatsu A."/>
            <person name="Hayashi K."/>
            <person name="Sato H."/>
            <person name="Nagai K."/>
            <person name="Kimura K."/>
            <person name="Makita H."/>
            <person name="Sekine M."/>
            <person name="Obayashi M."/>
            <person name="Nishi T."/>
            <person name="Shibahara T."/>
            <person name="Tanaka T."/>
            <person name="Ishii S."/>
            <person name="Yamamoto J."/>
            <person name="Saito K."/>
            <person name="Kawai Y."/>
            <person name="Isono Y."/>
            <person name="Nakamura Y."/>
            <person name="Nagahari K."/>
            <person name="Murakami K."/>
            <person name="Yasuda T."/>
            <person name="Iwayanagi T."/>
            <person name="Wagatsuma M."/>
            <person name="Shiratori A."/>
            <person name="Sudo H."/>
            <person name="Hosoiri T."/>
            <person name="Kaku Y."/>
            <person name="Kodaira H."/>
            <person name="Kondo H."/>
            <person name="Sugawara M."/>
            <person name="Takahashi M."/>
            <person name="Kanda K."/>
            <person name="Yokoi T."/>
            <person name="Furuya T."/>
            <person name="Kikkawa E."/>
            <person name="Omura Y."/>
            <person name="Abe K."/>
            <person name="Kamihara K."/>
            <person name="Katsuta N."/>
            <person name="Sato K."/>
            <person name="Tanikawa M."/>
            <person name="Yamazaki M."/>
            <person name="Ninomiya K."/>
            <person name="Ishibashi T."/>
            <person name="Yamashita H."/>
            <person name="Murakawa K."/>
            <person name="Fujimori K."/>
            <person name="Tanai H."/>
            <person name="Kimata M."/>
            <person name="Watanabe M."/>
            <person name="Hiraoka S."/>
            <person name="Chiba Y."/>
            <person name="Ishida S."/>
            <person name="Ono Y."/>
            <person name="Takiguchi S."/>
            <person name="Watanabe S."/>
            <person name="Yosida M."/>
            <person name="Hotuta T."/>
            <person name="Kusano J."/>
            <person name="Kanehori K."/>
            <person name="Takahashi-Fujii A."/>
            <person name="Hara H."/>
            <person name="Tanase T.-O."/>
            <person name="Nomura Y."/>
            <person name="Togiya S."/>
            <person name="Komai F."/>
            <person name="Hara R."/>
            <person name="Takeuchi K."/>
            <person name="Arita M."/>
            <person name="Imose N."/>
            <person name="Musashino K."/>
            <person name="Yuuki H."/>
            <person name="Oshima A."/>
            <person name="Sasaki N."/>
            <person name="Aotsuka S."/>
            <person name="Yoshikawa Y."/>
            <person name="Matsunawa H."/>
            <person name="Ichihara T."/>
            <person name="Shiohata N."/>
            <person name="Sano S."/>
            <person name="Moriya S."/>
            <person name="Momiyama H."/>
            <person name="Satoh N."/>
            <person name="Takami S."/>
            <person name="Terashima Y."/>
            <person name="Suzuki O."/>
            <person name="Nakagawa S."/>
            <person name="Senoh A."/>
            <person name="Mizoguchi H."/>
            <person name="Goto Y."/>
            <person name="Shimizu F."/>
            <person name="Wakebe H."/>
            <person name="Hishigaki H."/>
            <person name="Watanabe T."/>
            <person name="Sugiyama A."/>
            <person name="Takemoto M."/>
            <person name="Kawakami B."/>
            <person name="Yamazaki M."/>
            <person name="Watanabe K."/>
            <person name="Kumagai A."/>
            <person name="Itakura S."/>
            <person name="Fukuzumi Y."/>
            <person name="Fujimori Y."/>
            <person name="Komiyama M."/>
            <person name="Tashiro H."/>
            <person name="Tanigami A."/>
            <person name="Fujiwara T."/>
            <person name="Ono T."/>
            <person name="Yamada K."/>
            <person name="Fujii Y."/>
            <person name="Ozaki K."/>
            <person name="Hirao M."/>
            <person name="Ohmori Y."/>
            <person name="Kawabata A."/>
            <person name="Hikiji T."/>
            <person name="Kobatake N."/>
            <person name="Inagaki H."/>
            <person name="Ikema Y."/>
            <person name="Okamoto S."/>
            <person name="Okitani R."/>
            <person name="Kawakami T."/>
            <person name="Noguchi S."/>
            <person name="Itoh T."/>
            <person name="Shigeta K."/>
            <person name="Senba T."/>
            <person name="Matsumura K."/>
            <person name="Nakajima Y."/>
            <person name="Mizuno T."/>
            <person name="Morinaga M."/>
            <person name="Sasaki M."/>
            <person name="Togashi T."/>
            <person name="Oyama M."/>
            <person name="Hata H."/>
            <person name="Watanabe M."/>
            <person name="Komatsu T."/>
            <person name="Mizushima-Sugano J."/>
            <person name="Satoh T."/>
            <person name="Shirai Y."/>
            <person name="Takahashi Y."/>
            <person name="Nakagawa K."/>
            <person name="Okumura K."/>
            <person name="Nagase T."/>
            <person name="Nomura N."/>
            <person name="Kikuchi H."/>
            <person name="Masuho Y."/>
            <person name="Yamashita R."/>
            <person name="Nakai K."/>
            <person name="Yada T."/>
            <person name="Nakamura Y."/>
            <person name="Ohara O."/>
            <person name="Isogai T."/>
            <person name="Sugano S."/>
        </authorList>
    </citation>
    <scope>NUCLEOTIDE SEQUENCE [LARGE SCALE MRNA] (ISOFORM 1)</scope>
</reference>
<reference key="4">
    <citation type="submission" date="2005-07" db="EMBL/GenBank/DDBJ databases">
        <authorList>
            <person name="Mural R.J."/>
            <person name="Istrail S."/>
            <person name="Sutton G."/>
            <person name="Florea L."/>
            <person name="Halpern A.L."/>
            <person name="Mobarry C.M."/>
            <person name="Lippert R."/>
            <person name="Walenz B."/>
            <person name="Shatkay H."/>
            <person name="Dew I."/>
            <person name="Miller J.R."/>
            <person name="Flanigan M.J."/>
            <person name="Edwards N.J."/>
            <person name="Bolanos R."/>
            <person name="Fasulo D."/>
            <person name="Halldorsson B.V."/>
            <person name="Hannenhalli S."/>
            <person name="Turner R."/>
            <person name="Yooseph S."/>
            <person name="Lu F."/>
            <person name="Nusskern D.R."/>
            <person name="Shue B.C."/>
            <person name="Zheng X.H."/>
            <person name="Zhong F."/>
            <person name="Delcher A.L."/>
            <person name="Huson D.H."/>
            <person name="Kravitz S.A."/>
            <person name="Mouchard L."/>
            <person name="Reinert K."/>
            <person name="Remington K.A."/>
            <person name="Clark A.G."/>
            <person name="Waterman M.S."/>
            <person name="Eichler E.E."/>
            <person name="Adams M.D."/>
            <person name="Hunkapiller M.W."/>
            <person name="Myers E.W."/>
            <person name="Venter J.C."/>
        </authorList>
    </citation>
    <scope>NUCLEOTIDE SEQUENCE [LARGE SCALE GENOMIC DNA]</scope>
</reference>
<reference key="5">
    <citation type="journal article" date="2004" name="Genome Res.">
        <title>The status, quality, and expansion of the NIH full-length cDNA project: the Mammalian Gene Collection (MGC).</title>
        <authorList>
            <consortium name="The MGC Project Team"/>
        </authorList>
    </citation>
    <scope>NUCLEOTIDE SEQUENCE [LARGE SCALE MRNA] (ISOFORM 2)</scope>
    <source>
        <tissue>Uterus</tissue>
    </source>
</reference>
<reference key="6">
    <citation type="journal article" date="2007" name="BMC Genomics">
        <title>The full-ORF clone resource of the German cDNA consortium.</title>
        <authorList>
            <person name="Bechtel S."/>
            <person name="Rosenfelder H."/>
            <person name="Duda A."/>
            <person name="Schmidt C.P."/>
            <person name="Ernst U."/>
            <person name="Wellenreuther R."/>
            <person name="Mehrle A."/>
            <person name="Schuster C."/>
            <person name="Bahr A."/>
            <person name="Bloecker H."/>
            <person name="Heubner D."/>
            <person name="Hoerlein A."/>
            <person name="Michel G."/>
            <person name="Wedler H."/>
            <person name="Koehrer K."/>
            <person name="Ottenwaelder B."/>
            <person name="Poustka A."/>
            <person name="Wiemann S."/>
            <person name="Schupp I."/>
        </authorList>
    </citation>
    <scope>NUCLEOTIDE SEQUENCE [LARGE SCALE MRNA] OF 508-715 (ISOFORMS 1/2)</scope>
    <source>
        <tissue>Uterus</tissue>
    </source>
</reference>
<reference key="7">
    <citation type="journal article" date="2004" name="Anal. Chem.">
        <title>Robust phosphoproteomic profiling of tyrosine phosphorylation sites from human T cells using immobilized metal affinity chromatography and tandem mass spectrometry.</title>
        <authorList>
            <person name="Brill L.M."/>
            <person name="Salomon A.R."/>
            <person name="Ficarro S.B."/>
            <person name="Mukherji M."/>
            <person name="Stettler-Gill M."/>
            <person name="Peters E.C."/>
        </authorList>
    </citation>
    <scope>PHOSPHORYLATION [LARGE SCALE ANALYSIS] AT SER-432</scope>
    <scope>IDENTIFICATION BY MASS SPECTROMETRY [LARGE SCALE ANALYSIS]</scope>
    <source>
        <tissue>Leukemic T-cell</tissue>
    </source>
</reference>
<reference key="8">
    <citation type="journal article" date="2006" name="Cell">
        <title>Global, in vivo, and site-specific phosphorylation dynamics in signaling networks.</title>
        <authorList>
            <person name="Olsen J.V."/>
            <person name="Blagoev B."/>
            <person name="Gnad F."/>
            <person name="Macek B."/>
            <person name="Kumar C."/>
            <person name="Mortensen P."/>
            <person name="Mann M."/>
        </authorList>
    </citation>
    <scope>IDENTIFICATION BY MASS SPECTROMETRY [LARGE SCALE ANALYSIS]</scope>
    <source>
        <tissue>Cervix carcinoma</tissue>
    </source>
</reference>
<reference key="9">
    <citation type="journal article" date="2008" name="J. Proteome Res.">
        <title>Combining protein-based IMAC, peptide-based IMAC, and MudPIT for efficient phosphoproteomic analysis.</title>
        <authorList>
            <person name="Cantin G.T."/>
            <person name="Yi W."/>
            <person name="Lu B."/>
            <person name="Park S.K."/>
            <person name="Xu T."/>
            <person name="Lee J.-D."/>
            <person name="Yates J.R. III"/>
        </authorList>
    </citation>
    <scope>PHOSPHORYLATION [LARGE SCALE ANALYSIS] AT SER-621</scope>
    <scope>IDENTIFICATION BY MASS SPECTROMETRY [LARGE SCALE ANALYSIS]</scope>
    <source>
        <tissue>Cervix carcinoma</tissue>
    </source>
</reference>
<reference key="10">
    <citation type="journal article" date="2008" name="Mol. Cell">
        <title>Kinase-selective enrichment enables quantitative phosphoproteomics of the kinome across the cell cycle.</title>
        <authorList>
            <person name="Daub H."/>
            <person name="Olsen J.V."/>
            <person name="Bairlein M."/>
            <person name="Gnad F."/>
            <person name="Oppermann F.S."/>
            <person name="Korner R."/>
            <person name="Greff Z."/>
            <person name="Keri G."/>
            <person name="Stemmann O."/>
            <person name="Mann M."/>
        </authorList>
    </citation>
    <scope>PHOSPHORYLATION [LARGE SCALE ANALYSIS] AT SER-621</scope>
    <scope>IDENTIFICATION BY MASS SPECTROMETRY [LARGE SCALE ANALYSIS]</scope>
    <source>
        <tissue>Cervix carcinoma</tissue>
    </source>
</reference>
<reference key="11">
    <citation type="journal article" date="2008" name="Proc. Natl. Acad. Sci. U.S.A.">
        <title>A quantitative atlas of mitotic phosphorylation.</title>
        <authorList>
            <person name="Dephoure N."/>
            <person name="Zhou C."/>
            <person name="Villen J."/>
            <person name="Beausoleil S.A."/>
            <person name="Bakalarski C.E."/>
            <person name="Elledge S.J."/>
            <person name="Gygi S.P."/>
        </authorList>
    </citation>
    <scope>PHOSPHORYLATION [LARGE SCALE ANALYSIS] AT SER-296; SER-345; THR-348; SER-380; SER-409; SER-432; THR-436; SER-554; SER-621; THR-659 AND SER-694</scope>
    <scope>IDENTIFICATION BY MASS SPECTROMETRY [LARGE SCALE ANALYSIS]</scope>
    <source>
        <tissue>Cervix carcinoma</tissue>
    </source>
</reference>
<reference key="12">
    <citation type="journal article" date="2009" name="Anal. Chem.">
        <title>Lys-N and trypsin cover complementary parts of the phosphoproteome in a refined SCX-based approach.</title>
        <authorList>
            <person name="Gauci S."/>
            <person name="Helbig A.O."/>
            <person name="Slijper M."/>
            <person name="Krijgsveld J."/>
            <person name="Heck A.J."/>
            <person name="Mohammed S."/>
        </authorList>
    </citation>
    <scope>IDENTIFICATION BY MASS SPECTROMETRY [LARGE SCALE ANALYSIS]</scope>
</reference>
<reference key="13">
    <citation type="journal article" date="2009" name="Sci. Signal.">
        <title>Quantitative phosphoproteomic analysis of T cell receptor signaling reveals system-wide modulation of protein-protein interactions.</title>
        <authorList>
            <person name="Mayya V."/>
            <person name="Lundgren D.H."/>
            <person name="Hwang S.-I."/>
            <person name="Rezaul K."/>
            <person name="Wu L."/>
            <person name="Eng J.K."/>
            <person name="Rodionov V."/>
            <person name="Han D.K."/>
        </authorList>
    </citation>
    <scope>PHOSPHORYLATION [LARGE SCALE ANALYSIS] AT SER-432; THR-436 AND SER-621</scope>
    <scope>IDENTIFICATION BY MASS SPECTROMETRY [LARGE SCALE ANALYSIS]</scope>
    <source>
        <tissue>Leukemic T-cell</tissue>
    </source>
</reference>
<reference key="14">
    <citation type="journal article" date="2010" name="Sci. Signal.">
        <title>Quantitative phosphoproteomics reveals widespread full phosphorylation site occupancy during mitosis.</title>
        <authorList>
            <person name="Olsen J.V."/>
            <person name="Vermeulen M."/>
            <person name="Santamaria A."/>
            <person name="Kumar C."/>
            <person name="Miller M.L."/>
            <person name="Jensen L.J."/>
            <person name="Gnad F."/>
            <person name="Cox J."/>
            <person name="Jensen T.S."/>
            <person name="Nigg E.A."/>
            <person name="Brunak S."/>
            <person name="Mann M."/>
        </authorList>
    </citation>
    <scope>PHOSPHORYLATION [LARGE SCALE ANALYSIS] AT SER-380; SER-432; SER-621; SER-684 AND SER-694</scope>
    <scope>IDENTIFICATION BY MASS SPECTROMETRY [LARGE SCALE ANALYSIS]</scope>
    <source>
        <tissue>Cervix carcinoma</tissue>
    </source>
</reference>
<reference key="15">
    <citation type="journal article" date="2011" name="FEBS Lett.">
        <title>Somatostatin receptor 5 is palmitoylated by the interacting ZDHHC5 palmitoyltransferase.</title>
        <authorList>
            <person name="Kokkola T."/>
            <person name="Kruse C."/>
            <person name="Roy-Pogodzik E.M."/>
            <person name="Pekkinen J."/>
            <person name="Bauch C."/>
            <person name="Honck H.H."/>
            <person name="Hennemann H."/>
            <person name="Kreienkamp H.J."/>
        </authorList>
    </citation>
    <scope>FUNCTION</scope>
    <scope>CATALYTIC ACTIVITY</scope>
</reference>
<reference key="16">
    <citation type="journal article" date="2011" name="Sci. Signal.">
        <title>System-wide temporal characterization of the proteome and phosphoproteome of human embryonic stem cell differentiation.</title>
        <authorList>
            <person name="Rigbolt K.T."/>
            <person name="Prokhorova T.A."/>
            <person name="Akimov V."/>
            <person name="Henningsen J."/>
            <person name="Johansen P.T."/>
            <person name="Kratchmarova I."/>
            <person name="Kassem M."/>
            <person name="Mann M."/>
            <person name="Olsen J.V."/>
            <person name="Blagoev B."/>
        </authorList>
    </citation>
    <scope>PHOSPHORYLATION [LARGE SCALE ANALYSIS] AT SER-621</scope>
    <scope>IDENTIFICATION BY MASS SPECTROMETRY [LARGE SCALE ANALYSIS]</scope>
</reference>
<reference key="17">
    <citation type="journal article" date="2013" name="J. Proteome Res.">
        <title>Toward a comprehensive characterization of a human cancer cell phosphoproteome.</title>
        <authorList>
            <person name="Zhou H."/>
            <person name="Di Palma S."/>
            <person name="Preisinger C."/>
            <person name="Peng M."/>
            <person name="Polat A.N."/>
            <person name="Heck A.J."/>
            <person name="Mohammed S."/>
        </authorList>
    </citation>
    <scope>PHOSPHORYLATION [LARGE SCALE ANALYSIS] AT SER-247; SER-299; SER-380; SER-398; SER-406; SER-409; THR-411; SER-415; SER-425; SER-432; THR-436; SER-529; SER-554; SER-621; SER-684 AND SER-694</scope>
    <scope>IDENTIFICATION BY MASS SPECTROMETRY [LARGE SCALE ANALYSIS]</scope>
    <source>
        <tissue>Cervix carcinoma</tissue>
        <tissue>Erythroleukemia</tissue>
    </source>
</reference>
<reference key="18">
    <citation type="journal article" date="2014" name="J. Proteomics">
        <title>An enzyme assisted RP-RPLC approach for in-depth analysis of human liver phosphoproteome.</title>
        <authorList>
            <person name="Bian Y."/>
            <person name="Song C."/>
            <person name="Cheng K."/>
            <person name="Dong M."/>
            <person name="Wang F."/>
            <person name="Huang J."/>
            <person name="Sun D."/>
            <person name="Wang L."/>
            <person name="Ye M."/>
            <person name="Zou H."/>
        </authorList>
    </citation>
    <scope>PHOSPHORYLATION [LARGE SCALE ANALYSIS] AT SER-380 AND SER-554</scope>
    <scope>IDENTIFICATION BY MASS SPECTROMETRY [LARGE SCALE ANALYSIS]</scope>
    <source>
        <tissue>Liver</tissue>
    </source>
</reference>
<reference key="19">
    <citation type="journal article" date="2014" name="Mol. Cell. Proteomics">
        <title>Immunoaffinity enrichment and mass spectrometry analysis of protein methylation.</title>
        <authorList>
            <person name="Guo A."/>
            <person name="Gu H."/>
            <person name="Zhou J."/>
            <person name="Mulhern D."/>
            <person name="Wang Y."/>
            <person name="Lee K.A."/>
            <person name="Yang V."/>
            <person name="Aguiar M."/>
            <person name="Kornhauser J."/>
            <person name="Jia X."/>
            <person name="Ren J."/>
            <person name="Beausoleil S.A."/>
            <person name="Silva J.C."/>
            <person name="Vemulapalli V."/>
            <person name="Bedford M.T."/>
            <person name="Comb M.J."/>
        </authorList>
    </citation>
    <scope>METHYLATION [LARGE SCALE ANALYSIS] AT ARG-617</scope>
    <scope>IDENTIFICATION BY MASS SPECTROMETRY [LARGE SCALE ANALYSIS]</scope>
    <source>
        <tissue>Colon carcinoma</tissue>
    </source>
</reference>
<reference key="20">
    <citation type="journal article" date="2015" name="Nat. Commun.">
        <title>Activity-regulated trafficking of the palmitoyl-acyl transferase DHHC5.</title>
        <authorList>
            <person name="Brigidi G.S."/>
            <person name="Santyr B."/>
            <person name="Shimell J."/>
            <person name="Jovellar B."/>
            <person name="Bamji S.X."/>
        </authorList>
    </citation>
    <scope>FUNCTION</scope>
    <scope>INTERACTION WITH DLG4</scope>
    <scope>SUBCELLULAR LOCATION</scope>
    <scope>PHOSPHORYLATION AT TYR-533</scope>
    <scope>MUTAGENESIS OF TYR-533</scope>
    <scope>AUTOPALMITOYLATION</scope>
</reference>
<reference key="21">
    <citation type="journal article" date="2017" name="Sci. Rep.">
        <title>DHHC5-mediated palmitoylation of S1P receptor subtype 1 determines G-protein coupling.</title>
        <authorList>
            <person name="Badawy S.M.M."/>
            <person name="Okada T."/>
            <person name="Kajimoto T."/>
            <person name="Ijuin T."/>
            <person name="Nakamura S.I."/>
        </authorList>
    </citation>
    <scope>FUNCTION</scope>
    <scope>SUBCELLULAR LOCATION</scope>
    <scope>CATALYTIC ACTIVITY</scope>
</reference>
<reference key="22">
    <citation type="journal article" date="2019" name="EMBO Rep.">
        <title>S-acylated Golga7b stabilises DHHC5 at the plasma membrane to regulate cell adhesion.</title>
        <authorList>
            <person name="Woodley K.T."/>
            <person name="Collins M.O."/>
        </authorList>
    </citation>
    <scope>FUNCTION</scope>
    <scope>SUBCELLULAR LOCATION</scope>
    <scope>CATALYTIC ACTIVITY</scope>
</reference>
<reference key="23">
    <citation type="journal article" date="2019" name="Science">
        <title>Palmitoylation of NOD1 and NOD2 is required for bacterial sensing.</title>
        <authorList>
            <person name="Lu Y."/>
            <person name="Zheng Y."/>
            <person name="Coyaud E."/>
            <person name="Zhang C."/>
            <person name="Selvabaskaran A."/>
            <person name="Yu Y."/>
            <person name="Xu Z."/>
            <person name="Weng X."/>
            <person name="Chen J.S."/>
            <person name="Meng Y."/>
            <person name="Warner N."/>
            <person name="Cheng X."/>
            <person name="Liu Y."/>
            <person name="Yao B."/>
            <person name="Hu H."/>
            <person name="Xia Z."/>
            <person name="Muise A.M."/>
            <person name="Klip A."/>
            <person name="Brumell J.H."/>
            <person name="Girardin S.E."/>
            <person name="Ying S."/>
            <person name="Fairn G.D."/>
            <person name="Raught B."/>
            <person name="Sun Q."/>
            <person name="Neculai D."/>
        </authorList>
    </citation>
    <scope>FUNCTION</scope>
    <scope>CATALYTIC ACTIVITY</scope>
</reference>
<reference key="24">
    <citation type="journal article" date="2020" name="Nat. Commun.">
        <title>CD36 facilitates fatty acid uptake by dynamic palmitoylation-regulated endocytosis.</title>
        <authorList>
            <person name="Hao J.W."/>
            <person name="Wang J."/>
            <person name="Guo H."/>
            <person name="Zhao Y.Y."/>
            <person name="Sun H.H."/>
            <person name="Li Y.F."/>
            <person name="Lai X.Y."/>
            <person name="Zhao N."/>
            <person name="Wang X."/>
            <person name="Xie C."/>
            <person name="Hong L."/>
            <person name="Huang X."/>
            <person name="Wang H.R."/>
            <person name="Li C.B."/>
            <person name="Liang B."/>
            <person name="Chen S."/>
            <person name="Zhao T.J."/>
        </authorList>
    </citation>
    <scope>FUNCTION</scope>
    <scope>PHOSPHORYLATION AT TYR-91</scope>
    <scope>MUTAGENESIS OF TYR-91</scope>
    <scope>SUBCELLULAR LOCATION</scope>
</reference>
<reference key="25">
    <citation type="journal article" date="2021" name="J. Lipid Res.">
        <title>S-palmitoylation of NOD2 controls its localization to the plasma membrane.</title>
        <authorList>
            <person name="Dixon C.L."/>
            <person name="Fairn G.D."/>
        </authorList>
    </citation>
    <scope>FUNCTION</scope>
    <scope>CATALYTIC ACTIVITY</scope>
</reference>
<reference key="26">
    <citation type="journal article" date="2023" name="Mol. Cell">
        <title>ZDHHC5-mediated NLRP3 palmitoylation promotes NLRP3-NEK7 interaction and inflammasome activation.</title>
        <authorList>
            <person name="Zheng S."/>
            <person name="Que X."/>
            <person name="Wang S."/>
            <person name="Zhou Q."/>
            <person name="Xing X."/>
            <person name="Chen L."/>
            <person name="Hou C."/>
            <person name="Ma J."/>
            <person name="An P."/>
            <person name="Peng Y."/>
            <person name="Yao Y."/>
            <person name="Song Q."/>
            <person name="Li J."/>
            <person name="Zhang P."/>
            <person name="Pei H."/>
        </authorList>
    </citation>
    <scope>FUNCTION</scope>
</reference>
<reference key="27">
    <citation type="journal article" date="2024" name="Nature">
        <title>ROS-dependent S-palmitoylation activates cleaved and intact gasdermin D.</title>
        <authorList>
            <person name="Du G."/>
            <person name="Healy L.B."/>
            <person name="David L."/>
            <person name="Walker C."/>
            <person name="El-Baba T.J."/>
            <person name="Lutomski C.A."/>
            <person name="Goh B."/>
            <person name="Gu B."/>
            <person name="Pi X."/>
            <person name="Devant P."/>
            <person name="Fontana P."/>
            <person name="Dong Y."/>
            <person name="Ma X."/>
            <person name="Miao R."/>
            <person name="Balasubramanian A."/>
            <person name="Puthenveetil R."/>
            <person name="Banerjee A."/>
            <person name="Luo H.R."/>
            <person name="Kagan J.C."/>
            <person name="Oh S.F."/>
            <person name="Robinson C.V."/>
            <person name="Lieberman J."/>
            <person name="Wu H."/>
        </authorList>
    </citation>
    <scope>FUNCTION</scope>
    <scope>CATALYTIC ACTIVITY</scope>
</reference>
<reference key="28">
    <citation type="journal article" date="2024" name="Sci. Immunol.">
        <title>The palmitoylation of gasdermin D directs its membrane translocation and pore formation during pyroptosis.</title>
        <authorList>
            <person name="Balasubramanian A."/>
            <person name="Hsu A.Y."/>
            <person name="Ghimire L."/>
            <person name="Tahir M."/>
            <person name="Devant P."/>
            <person name="Fontana P."/>
            <person name="Du G."/>
            <person name="Liu X."/>
            <person name="Fabin D."/>
            <person name="Kambara H."/>
            <person name="Xie X."/>
            <person name="Liu F."/>
            <person name="Hasegawa T."/>
            <person name="Xu R."/>
            <person name="Yu H."/>
            <person name="Chen M."/>
            <person name="Kolakowski S."/>
            <person name="Trauger S."/>
            <person name="Larsen M.R."/>
            <person name="Wei W."/>
            <person name="Wu H."/>
            <person name="Kagan J.C."/>
            <person name="Lieberman J."/>
            <person name="Luo H.R."/>
        </authorList>
    </citation>
    <scope>FUNCTION</scope>
    <scope>CATALYTIC ACTIVITY</scope>
</reference>
<organism>
    <name type="scientific">Homo sapiens</name>
    <name type="common">Human</name>
    <dbReference type="NCBI Taxonomy" id="9606"/>
    <lineage>
        <taxon>Eukaryota</taxon>
        <taxon>Metazoa</taxon>
        <taxon>Chordata</taxon>
        <taxon>Craniata</taxon>
        <taxon>Vertebrata</taxon>
        <taxon>Euteleostomi</taxon>
        <taxon>Mammalia</taxon>
        <taxon>Eutheria</taxon>
        <taxon>Euarchontoglires</taxon>
        <taxon>Primates</taxon>
        <taxon>Haplorrhini</taxon>
        <taxon>Catarrhini</taxon>
        <taxon>Hominidae</taxon>
        <taxon>Homo</taxon>
    </lineage>
</organism>
<proteinExistence type="evidence at protein level"/>
<evidence type="ECO:0000250" key="1">
    <source>
        <dbReference type="UniProtKB" id="Q2THW7"/>
    </source>
</evidence>
<evidence type="ECO:0000250" key="2">
    <source>
        <dbReference type="UniProtKB" id="Q8IUH5"/>
    </source>
</evidence>
<evidence type="ECO:0000250" key="3">
    <source>
        <dbReference type="UniProtKB" id="Q8VDZ4"/>
    </source>
</evidence>
<evidence type="ECO:0000255" key="4"/>
<evidence type="ECO:0000255" key="5">
    <source>
        <dbReference type="PROSITE-ProRule" id="PRU00067"/>
    </source>
</evidence>
<evidence type="ECO:0000256" key="6">
    <source>
        <dbReference type="SAM" id="MobiDB-lite"/>
    </source>
</evidence>
<evidence type="ECO:0000269" key="7">
    <source>
    </source>
</evidence>
<evidence type="ECO:0000269" key="8">
    <source>
    </source>
</evidence>
<evidence type="ECO:0000269" key="9">
    <source>
    </source>
</evidence>
<evidence type="ECO:0000269" key="10">
    <source>
    </source>
</evidence>
<evidence type="ECO:0000269" key="11">
    <source>
    </source>
</evidence>
<evidence type="ECO:0000269" key="12">
    <source>
    </source>
</evidence>
<evidence type="ECO:0000269" key="13">
    <source>
    </source>
</evidence>
<evidence type="ECO:0000269" key="14">
    <source>
    </source>
</evidence>
<evidence type="ECO:0000269" key="15">
    <source>
    </source>
</evidence>
<evidence type="ECO:0000269" key="16">
    <source>
    </source>
</evidence>
<evidence type="ECO:0000303" key="17">
    <source>
    </source>
</evidence>
<evidence type="ECO:0000303" key="18">
    <source>
    </source>
</evidence>
<evidence type="ECO:0000305" key="19"/>
<evidence type="ECO:0000312" key="20">
    <source>
        <dbReference type="HGNC" id="HGNC:18472"/>
    </source>
</evidence>
<evidence type="ECO:0007744" key="21">
    <source>
    </source>
</evidence>
<evidence type="ECO:0007744" key="22">
    <source>
    </source>
</evidence>
<evidence type="ECO:0007744" key="23">
    <source>
    </source>
</evidence>
<evidence type="ECO:0007744" key="24">
    <source>
    </source>
</evidence>
<evidence type="ECO:0007744" key="25">
    <source>
    </source>
</evidence>
<evidence type="ECO:0007744" key="26">
    <source>
    </source>
</evidence>
<evidence type="ECO:0007744" key="27">
    <source>
    </source>
</evidence>
<evidence type="ECO:0007744" key="28">
    <source>
    </source>
</evidence>
<evidence type="ECO:0007744" key="29">
    <source>
    </source>
</evidence>
<evidence type="ECO:0007744" key="30">
    <source>
    </source>
</evidence>
<name>ZDHC5_HUMAN</name>
<keyword id="KW-0012">Acyltransferase</keyword>
<keyword id="KW-0025">Alternative splicing</keyword>
<keyword id="KW-1003">Cell membrane</keyword>
<keyword id="KW-0391">Immunity</keyword>
<keyword id="KW-0399">Innate immunity</keyword>
<keyword id="KW-0445">Lipid transport</keyword>
<keyword id="KW-0449">Lipoprotein</keyword>
<keyword id="KW-0472">Membrane</keyword>
<keyword id="KW-0488">Methylation</keyword>
<keyword id="KW-0564">Palmitate</keyword>
<keyword id="KW-0597">Phosphoprotein</keyword>
<keyword id="KW-1267">Proteomics identification</keyword>
<keyword id="KW-1185">Reference proteome</keyword>
<keyword id="KW-0770">Synapse</keyword>
<keyword id="KW-0808">Transferase</keyword>
<keyword id="KW-0812">Transmembrane</keyword>
<keyword id="KW-1133">Transmembrane helix</keyword>
<keyword id="KW-0813">Transport</keyword>
<dbReference type="EC" id="2.3.1.225" evidence="9 10 11 15 16"/>
<dbReference type="EMBL" id="AB051535">
    <property type="protein sequence ID" value="BAB21839.1"/>
    <property type="status" value="ALT_INIT"/>
    <property type="molecule type" value="mRNA"/>
</dbReference>
<dbReference type="EMBL" id="AY894889">
    <property type="protein sequence ID" value="AAX73368.1"/>
    <property type="molecule type" value="mRNA"/>
</dbReference>
<dbReference type="EMBL" id="AK023130">
    <property type="protein sequence ID" value="BAB14420.1"/>
    <property type="molecule type" value="mRNA"/>
</dbReference>
<dbReference type="EMBL" id="AK172807">
    <property type="protein sequence ID" value="BAD18778.1"/>
    <property type="status" value="ALT_INIT"/>
    <property type="molecule type" value="mRNA"/>
</dbReference>
<dbReference type="EMBL" id="CH471076">
    <property type="protein sequence ID" value="EAW73771.1"/>
    <property type="molecule type" value="Genomic_DNA"/>
</dbReference>
<dbReference type="EMBL" id="BC026967">
    <property type="protein sequence ID" value="AAH26967.1"/>
    <property type="molecule type" value="mRNA"/>
</dbReference>
<dbReference type="EMBL" id="AL117662">
    <property type="protein sequence ID" value="CAB56033.1"/>
    <property type="molecule type" value="mRNA"/>
</dbReference>
<dbReference type="CCDS" id="CCDS7965.1">
    <molecule id="Q9C0B5-1"/>
</dbReference>
<dbReference type="PIR" id="T17343">
    <property type="entry name" value="T17343"/>
</dbReference>
<dbReference type="RefSeq" id="NP_056272.2">
    <molecule id="Q9C0B5-1"/>
    <property type="nucleotide sequence ID" value="NM_015457.2"/>
</dbReference>
<dbReference type="RefSeq" id="XP_011543201.1">
    <molecule id="Q9C0B5-1"/>
    <property type="nucleotide sequence ID" value="XM_011544899.2"/>
</dbReference>
<dbReference type="RefSeq" id="XP_011543202.1">
    <molecule id="Q9C0B5-1"/>
    <property type="nucleotide sequence ID" value="XM_011544900.2"/>
</dbReference>
<dbReference type="RefSeq" id="XP_011543203.1">
    <molecule id="Q9C0B5-1"/>
    <property type="nucleotide sequence ID" value="XM_011544901.2"/>
</dbReference>
<dbReference type="RefSeq" id="XP_054224324.1">
    <molecule id="Q9C0B5-1"/>
    <property type="nucleotide sequence ID" value="XM_054368349.1"/>
</dbReference>
<dbReference type="RefSeq" id="XP_054224325.1">
    <molecule id="Q9C0B5-1"/>
    <property type="nucleotide sequence ID" value="XM_054368350.1"/>
</dbReference>
<dbReference type="RefSeq" id="XP_054224326.1">
    <molecule id="Q9C0B5-1"/>
    <property type="nucleotide sequence ID" value="XM_054368351.1"/>
</dbReference>
<dbReference type="SMR" id="Q9C0B5"/>
<dbReference type="BioGRID" id="117422">
    <property type="interactions" value="124"/>
</dbReference>
<dbReference type="CORUM" id="Q9C0B5"/>
<dbReference type="FunCoup" id="Q9C0B5">
    <property type="interactions" value="1954"/>
</dbReference>
<dbReference type="IntAct" id="Q9C0B5">
    <property type="interactions" value="521"/>
</dbReference>
<dbReference type="MINT" id="Q9C0B5"/>
<dbReference type="STRING" id="9606.ENSP00000287169"/>
<dbReference type="GlyGen" id="Q9C0B5">
    <property type="glycosylation" value="5 sites, 1 N-linked glycan (1 site), 1 O-linked glycan (1 site)"/>
</dbReference>
<dbReference type="iPTMnet" id="Q9C0B5"/>
<dbReference type="PhosphoSitePlus" id="Q9C0B5"/>
<dbReference type="SwissPalm" id="Q9C0B5"/>
<dbReference type="BioMuta" id="ZDHHC5"/>
<dbReference type="DMDM" id="28202103"/>
<dbReference type="jPOST" id="Q9C0B5"/>
<dbReference type="MassIVE" id="Q9C0B5"/>
<dbReference type="PaxDb" id="9606-ENSP00000287169"/>
<dbReference type="PeptideAtlas" id="Q9C0B5"/>
<dbReference type="ProteomicsDB" id="79989">
    <molecule id="Q9C0B5-1"/>
</dbReference>
<dbReference type="ProteomicsDB" id="79990">
    <molecule id="Q9C0B5-2"/>
</dbReference>
<dbReference type="Pumba" id="Q9C0B5"/>
<dbReference type="Antibodypedia" id="3027">
    <property type="antibodies" value="95 antibodies from 22 providers"/>
</dbReference>
<dbReference type="DNASU" id="25921"/>
<dbReference type="Ensembl" id="ENST00000287169.8">
    <molecule id="Q9C0B5-1"/>
    <property type="protein sequence ID" value="ENSP00000287169.3"/>
    <property type="gene ID" value="ENSG00000156599.11"/>
</dbReference>
<dbReference type="Ensembl" id="ENST00000527985.5">
    <molecule id="Q9C0B5-2"/>
    <property type="protein sequence ID" value="ENSP00000432202.1"/>
    <property type="gene ID" value="ENSG00000156599.11"/>
</dbReference>
<dbReference type="GeneID" id="25921"/>
<dbReference type="KEGG" id="hsa:25921"/>
<dbReference type="MANE-Select" id="ENST00000287169.8">
    <property type="protein sequence ID" value="ENSP00000287169.3"/>
    <property type="RefSeq nucleotide sequence ID" value="NM_015457.3"/>
    <property type="RefSeq protein sequence ID" value="NP_056272.2"/>
</dbReference>
<dbReference type="UCSC" id="uc001nkx.2">
    <molecule id="Q9C0B5-1"/>
    <property type="organism name" value="human"/>
</dbReference>
<dbReference type="AGR" id="HGNC:18472"/>
<dbReference type="CTD" id="25921"/>
<dbReference type="DisGeNET" id="25921"/>
<dbReference type="GeneCards" id="ZDHHC5"/>
<dbReference type="HGNC" id="HGNC:18472">
    <property type="gene designation" value="ZDHHC5"/>
</dbReference>
<dbReference type="HPA" id="ENSG00000156599">
    <property type="expression patterns" value="Low tissue specificity"/>
</dbReference>
<dbReference type="MIM" id="614586">
    <property type="type" value="gene"/>
</dbReference>
<dbReference type="neXtProt" id="NX_Q9C0B5"/>
<dbReference type="OpenTargets" id="ENSG00000156599"/>
<dbReference type="PharmGKB" id="PA38338"/>
<dbReference type="VEuPathDB" id="HostDB:ENSG00000156599"/>
<dbReference type="eggNOG" id="KOG1311">
    <property type="taxonomic scope" value="Eukaryota"/>
</dbReference>
<dbReference type="GeneTree" id="ENSGT00940000156001"/>
<dbReference type="HOGENOM" id="CLU_013779_0_0_1"/>
<dbReference type="InParanoid" id="Q9C0B5"/>
<dbReference type="OMA" id="KMTRGES"/>
<dbReference type="OrthoDB" id="4096362at2759"/>
<dbReference type="PAN-GO" id="Q9C0B5">
    <property type="GO annotations" value="3 GO annotations based on evolutionary models"/>
</dbReference>
<dbReference type="PhylomeDB" id="Q9C0B5"/>
<dbReference type="TreeFam" id="TF354263"/>
<dbReference type="BRENDA" id="2.3.1.225">
    <property type="organism ID" value="2681"/>
</dbReference>
<dbReference type="PathwayCommons" id="Q9C0B5"/>
<dbReference type="Reactome" id="R-HSA-9694548">
    <property type="pathway name" value="Maturation of spike protein"/>
</dbReference>
<dbReference type="SignaLink" id="Q9C0B5"/>
<dbReference type="SIGNOR" id="Q9C0B5"/>
<dbReference type="BioGRID-ORCS" id="25921">
    <property type="hits" value="23 hits in 1186 CRISPR screens"/>
</dbReference>
<dbReference type="ChiTaRS" id="ZDHHC5">
    <property type="organism name" value="human"/>
</dbReference>
<dbReference type="GenomeRNAi" id="25921"/>
<dbReference type="Pharos" id="Q9C0B5">
    <property type="development level" value="Tbio"/>
</dbReference>
<dbReference type="PRO" id="PR:Q9C0B5"/>
<dbReference type="Proteomes" id="UP000005640">
    <property type="component" value="Chromosome 11"/>
</dbReference>
<dbReference type="RNAct" id="Q9C0B5">
    <property type="molecule type" value="protein"/>
</dbReference>
<dbReference type="Bgee" id="ENSG00000156599">
    <property type="expression patterns" value="Expressed in esophagus squamous epithelium and 185 other cell types or tissues"/>
</dbReference>
<dbReference type="ExpressionAtlas" id="Q9C0B5">
    <property type="expression patterns" value="baseline and differential"/>
</dbReference>
<dbReference type="GO" id="GO:0030425">
    <property type="term" value="C:dendrite"/>
    <property type="evidence" value="ECO:0007669"/>
    <property type="project" value="Ensembl"/>
</dbReference>
<dbReference type="GO" id="GO:0098982">
    <property type="term" value="C:GABA-ergic synapse"/>
    <property type="evidence" value="ECO:0007669"/>
    <property type="project" value="Ensembl"/>
</dbReference>
<dbReference type="GO" id="GO:0098978">
    <property type="term" value="C:glutamatergic synapse"/>
    <property type="evidence" value="ECO:0007669"/>
    <property type="project" value="Ensembl"/>
</dbReference>
<dbReference type="GO" id="GO:0000139">
    <property type="term" value="C:Golgi membrane"/>
    <property type="evidence" value="ECO:0000304"/>
    <property type="project" value="Reactome"/>
</dbReference>
<dbReference type="GO" id="GO:0016020">
    <property type="term" value="C:membrane"/>
    <property type="evidence" value="ECO:0007005"/>
    <property type="project" value="UniProtKB"/>
</dbReference>
<dbReference type="GO" id="GO:0005654">
    <property type="term" value="C:nucleoplasm"/>
    <property type="evidence" value="ECO:0000314"/>
    <property type="project" value="HPA"/>
</dbReference>
<dbReference type="GO" id="GO:0045335">
    <property type="term" value="C:phagocytic vesicle"/>
    <property type="evidence" value="ECO:0000314"/>
    <property type="project" value="UniProtKB"/>
</dbReference>
<dbReference type="GO" id="GO:0005886">
    <property type="term" value="C:plasma membrane"/>
    <property type="evidence" value="ECO:0000314"/>
    <property type="project" value="HPA"/>
</dbReference>
<dbReference type="GO" id="GO:0099091">
    <property type="term" value="C:postsynaptic specialization, intracellular component"/>
    <property type="evidence" value="ECO:0007669"/>
    <property type="project" value="Ensembl"/>
</dbReference>
<dbReference type="GO" id="GO:0016409">
    <property type="term" value="F:palmitoyltransferase activity"/>
    <property type="evidence" value="ECO:0000314"/>
    <property type="project" value="UniProtKB"/>
</dbReference>
<dbReference type="GO" id="GO:0019706">
    <property type="term" value="F:protein-cysteine S-palmitoyltransferase activity"/>
    <property type="evidence" value="ECO:0000314"/>
    <property type="project" value="UniProtKB"/>
</dbReference>
<dbReference type="GO" id="GO:0045087">
    <property type="term" value="P:innate immune response"/>
    <property type="evidence" value="ECO:0007669"/>
    <property type="project" value="UniProtKB-KW"/>
</dbReference>
<dbReference type="GO" id="GO:0006869">
    <property type="term" value="P:lipid transport"/>
    <property type="evidence" value="ECO:0007669"/>
    <property type="project" value="UniProtKB-KW"/>
</dbReference>
<dbReference type="GO" id="GO:1900227">
    <property type="term" value="P:positive regulation of NLRP3 inflammasome complex assembly"/>
    <property type="evidence" value="ECO:0000314"/>
    <property type="project" value="UniProt"/>
</dbReference>
<dbReference type="GO" id="GO:0062208">
    <property type="term" value="P:positive regulation of pattern recognition receptor signaling pathway"/>
    <property type="evidence" value="ECO:0000315"/>
    <property type="project" value="UniProtKB"/>
</dbReference>
<dbReference type="GO" id="GO:1905171">
    <property type="term" value="P:positive regulation of protein localization to phagocytic vesicle"/>
    <property type="evidence" value="ECO:0007669"/>
    <property type="project" value="Ensembl"/>
</dbReference>
<dbReference type="GO" id="GO:1903078">
    <property type="term" value="P:positive regulation of protein localization to plasma membrane"/>
    <property type="evidence" value="ECO:0000315"/>
    <property type="project" value="UniProtKB"/>
</dbReference>
<dbReference type="GO" id="GO:0140639">
    <property type="term" value="P:positive regulation of pyroptotic inflammatory response"/>
    <property type="evidence" value="ECO:0000314"/>
    <property type="project" value="UniProtKB"/>
</dbReference>
<dbReference type="GO" id="GO:0072659">
    <property type="term" value="P:protein localization to plasma membrane"/>
    <property type="evidence" value="ECO:0000314"/>
    <property type="project" value="UniProt"/>
</dbReference>
<dbReference type="GO" id="GO:0018345">
    <property type="term" value="P:protein palmitoylation"/>
    <property type="evidence" value="ECO:0000314"/>
    <property type="project" value="UniProtKB"/>
</dbReference>
<dbReference type="GO" id="GO:0099072">
    <property type="term" value="P:regulation of postsynaptic membrane neurotransmitter receptor levels"/>
    <property type="evidence" value="ECO:0007669"/>
    <property type="project" value="Ensembl"/>
</dbReference>
<dbReference type="InterPro" id="IPR001594">
    <property type="entry name" value="Palmitoyltrfase_DHHC"/>
</dbReference>
<dbReference type="PANTHER" id="PTHR12349">
    <property type="entry name" value="ANKYRIN REPEAT AND LEM DOMAIN-CONTAINING PROTEIN 2"/>
    <property type="match status" value="1"/>
</dbReference>
<dbReference type="PANTHER" id="PTHR12349:SF3">
    <property type="entry name" value="PALMITOYLTRANSFERASE ZDHHC5"/>
    <property type="match status" value="1"/>
</dbReference>
<dbReference type="Pfam" id="PF01529">
    <property type="entry name" value="DHHC"/>
    <property type="match status" value="1"/>
</dbReference>
<dbReference type="PROSITE" id="PS50216">
    <property type="entry name" value="DHHC"/>
    <property type="match status" value="1"/>
</dbReference>
<accession>Q9C0B5</accession>
<accession>Q2TGF0</accession>
<accession>Q6ZMF0</accession>
<accession>Q8TAK8</accession>
<accession>Q9H923</accession>
<accession>Q9UFI7</accession>
<sequence length="715" mass="77545">MPAESGKRFKPSKYVPVSAAAIFLVGATTLFFAFTCPGLSLYVSPAVPIYNAIMFLFVLANFSMATFMDPGIFPRAEEDEDKEDDFRAPLYKTVEIKGIQVRMKWCATCRFYRPPRCSHCSVCDNCVEEFDHHCPWVNNCIGRRNYRYFFLFLLSLTAHIMGVFGFGLLYVLYHIEELSGVRTAVTMAVMCVAGLFFIPVAGLTGFHVVLVARGRTTNEQVTGKFRGGVNPFTNGCCNNVSRVLCSSPAPRYLGRPKKEKTIVIRPPFLRPEVSDGQITVKIMDNGIQGELRRTKSKGSLEITESQSADAEPPPPPKPDLSRYTGLRTHLGLATNEDSSLLAKDSPPTPTMYKYRPGYSSSSTSAAMPHSSSAKLSRGDSLKEPTSIAESSRHPSYRSEPSLEPESFRSPTFGKSFHFDPLSSGSRSSSLKSAQGTGFELGQLQSIRSEGTTSTSYKSLANQTRNGSLSYDSLLTPSDSPDFESVQAGPEPDPPLGYTSPFLSARLAQQREAERHPRLVPTGPTHREPSPVRYDNLSRHIVASLQEREKLLRQSPPLPGREEEPGLGDSGIQSTPGSGHAPRTSSSSDDSKRSPLGKTPLGRPAVPRFGKPDGLRGRGVGSPEPGPTAPYLGRSMSYSSQKAQPGVSETEEVALQPLLTPKDEVQLKTTYSKSNGQPKSLGSASPGPGQPPLSSPTRGGVKKVSGVGGTTYEISV</sequence>